<feature type="chain" id="PRO_0000199372" description="Formate--tetrahydrofolate ligase">
    <location>
        <begin position="1"/>
        <end position="559"/>
    </location>
</feature>
<feature type="binding site" evidence="1">
    <location>
        <begin position="68"/>
        <end position="75"/>
    </location>
    <ligand>
        <name>ATP</name>
        <dbReference type="ChEBI" id="CHEBI:30616"/>
    </ligand>
</feature>
<accession>Q92N42</accession>
<protein>
    <recommendedName>
        <fullName evidence="1">Formate--tetrahydrofolate ligase</fullName>
        <ecNumber evidence="1">6.3.4.3</ecNumber>
    </recommendedName>
    <alternativeName>
        <fullName evidence="1">Formyltetrahydrofolate synthetase</fullName>
        <shortName evidence="1">FHS</shortName>
        <shortName evidence="1">FTHFS</shortName>
    </alternativeName>
</protein>
<evidence type="ECO:0000255" key="1">
    <source>
        <dbReference type="HAMAP-Rule" id="MF_01543"/>
    </source>
</evidence>
<evidence type="ECO:0000305" key="2"/>
<keyword id="KW-0067">ATP-binding</keyword>
<keyword id="KW-0436">Ligase</keyword>
<keyword id="KW-0547">Nucleotide-binding</keyword>
<keyword id="KW-0554">One-carbon metabolism</keyword>
<keyword id="KW-1185">Reference proteome</keyword>
<gene>
    <name evidence="1" type="primary">fhs</name>
    <name type="ordered locus">R02390</name>
    <name type="ORF">SMc02728</name>
</gene>
<proteinExistence type="inferred from homology"/>
<sequence length="559" mass="60412">MGEVKSDIEIARAARKQPIMEVGAKLGIPPEHLLPYGHDKAKVSAEFIAAQNEKRNGRLILVTAINPTPAGEGKTTTTVGLGDGLNRIGKKAIVCIREASLGPCFGIKGGAAGGGYAQVVPMEDINLHFTGDFHAITSAHNLLSALIDNHIYWGNEQAIDIRRIAWRRVMDMNDRALRQIVGSLGGVANGYPRETGFDITVASEVMAILCLAMDIKDLEKRLGNIIIGYRRDKSPVFARDIKADGAMAVLLKDAMQPNLVQTLENNPAFVHGGPFANIAHGCNSVVATTTALKLADYVVTEAGFGADLGAEKFFDIKCRKAGLTPDAAVIVATVRAIKMNGGVKREDLGRESVEAVRKGCANLGRHIQNVKKFGVPVLVAINHFTSDTEAEVRAIKDYVRTLGSEAVLCKHWAEGSAGIEELAYKVVDLANAGHSQFSPLYPDEMPLFQKIETIAKDIYHASEVIADKLVREQLRTWEDQGYGDLPICMAKTQYSFSTDPNLRGAPTGHAVPIREVRLAAGAGFIVVITGEIMTMPGLPKVPSSERIRLNEQGYIEGLF</sequence>
<reference key="1">
    <citation type="journal article" date="2001" name="Proc. Natl. Acad. Sci. U.S.A.">
        <title>Analysis of the chromosome sequence of the legume symbiont Sinorhizobium meliloti strain 1021.</title>
        <authorList>
            <person name="Capela D."/>
            <person name="Barloy-Hubler F."/>
            <person name="Gouzy J."/>
            <person name="Bothe G."/>
            <person name="Ampe F."/>
            <person name="Batut J."/>
            <person name="Boistard P."/>
            <person name="Becker A."/>
            <person name="Boutry M."/>
            <person name="Cadieu E."/>
            <person name="Dreano S."/>
            <person name="Gloux S."/>
            <person name="Godrie T."/>
            <person name="Goffeau A."/>
            <person name="Kahn D."/>
            <person name="Kiss E."/>
            <person name="Lelaure V."/>
            <person name="Masuy D."/>
            <person name="Pohl T."/>
            <person name="Portetelle D."/>
            <person name="Puehler A."/>
            <person name="Purnelle B."/>
            <person name="Ramsperger U."/>
            <person name="Renard C."/>
            <person name="Thebault P."/>
            <person name="Vandenbol M."/>
            <person name="Weidner S."/>
            <person name="Galibert F."/>
        </authorList>
    </citation>
    <scope>NUCLEOTIDE SEQUENCE [LARGE SCALE GENOMIC DNA]</scope>
    <source>
        <strain>1021</strain>
    </source>
</reference>
<reference key="2">
    <citation type="journal article" date="2001" name="Science">
        <title>The composite genome of the legume symbiont Sinorhizobium meliloti.</title>
        <authorList>
            <person name="Galibert F."/>
            <person name="Finan T.M."/>
            <person name="Long S.R."/>
            <person name="Puehler A."/>
            <person name="Abola P."/>
            <person name="Ampe F."/>
            <person name="Barloy-Hubler F."/>
            <person name="Barnett M.J."/>
            <person name="Becker A."/>
            <person name="Boistard P."/>
            <person name="Bothe G."/>
            <person name="Boutry M."/>
            <person name="Bowser L."/>
            <person name="Buhrmester J."/>
            <person name="Cadieu E."/>
            <person name="Capela D."/>
            <person name="Chain P."/>
            <person name="Cowie A."/>
            <person name="Davis R.W."/>
            <person name="Dreano S."/>
            <person name="Federspiel N.A."/>
            <person name="Fisher R.F."/>
            <person name="Gloux S."/>
            <person name="Godrie T."/>
            <person name="Goffeau A."/>
            <person name="Golding B."/>
            <person name="Gouzy J."/>
            <person name="Gurjal M."/>
            <person name="Hernandez-Lucas I."/>
            <person name="Hong A."/>
            <person name="Huizar L."/>
            <person name="Hyman R.W."/>
            <person name="Jones T."/>
            <person name="Kahn D."/>
            <person name="Kahn M.L."/>
            <person name="Kalman S."/>
            <person name="Keating D.H."/>
            <person name="Kiss E."/>
            <person name="Komp C."/>
            <person name="Lelaure V."/>
            <person name="Masuy D."/>
            <person name="Palm C."/>
            <person name="Peck M.C."/>
            <person name="Pohl T.M."/>
            <person name="Portetelle D."/>
            <person name="Purnelle B."/>
            <person name="Ramsperger U."/>
            <person name="Surzycki R."/>
            <person name="Thebault P."/>
            <person name="Vandenbol M."/>
            <person name="Vorhoelter F.J."/>
            <person name="Weidner S."/>
            <person name="Wells D.H."/>
            <person name="Wong K."/>
            <person name="Yeh K.-C."/>
            <person name="Batut J."/>
        </authorList>
    </citation>
    <scope>NUCLEOTIDE SEQUENCE [LARGE SCALE GENOMIC DNA]</scope>
    <source>
        <strain>1021</strain>
    </source>
</reference>
<dbReference type="EC" id="6.3.4.3" evidence="1"/>
<dbReference type="EMBL" id="AL591688">
    <property type="protein sequence ID" value="CAC46969.1"/>
    <property type="status" value="ALT_INIT"/>
    <property type="molecule type" value="Genomic_DNA"/>
</dbReference>
<dbReference type="RefSeq" id="NP_386496.2">
    <property type="nucleotide sequence ID" value="NC_003047.1"/>
</dbReference>
<dbReference type="SMR" id="Q92N42"/>
<dbReference type="EnsemblBacteria" id="CAC46969">
    <property type="protein sequence ID" value="CAC46969"/>
    <property type="gene ID" value="SMc02728"/>
</dbReference>
<dbReference type="KEGG" id="sme:SMc02728"/>
<dbReference type="PATRIC" id="fig|266834.11.peg.3874"/>
<dbReference type="eggNOG" id="COG2759">
    <property type="taxonomic scope" value="Bacteria"/>
</dbReference>
<dbReference type="HOGENOM" id="CLU_003601_3_3_5"/>
<dbReference type="OrthoDB" id="9761733at2"/>
<dbReference type="UniPathway" id="UPA00193"/>
<dbReference type="Proteomes" id="UP000001976">
    <property type="component" value="Chromosome"/>
</dbReference>
<dbReference type="GO" id="GO:0005524">
    <property type="term" value="F:ATP binding"/>
    <property type="evidence" value="ECO:0007669"/>
    <property type="project" value="UniProtKB-UniRule"/>
</dbReference>
<dbReference type="GO" id="GO:0004329">
    <property type="term" value="F:formate-tetrahydrofolate ligase activity"/>
    <property type="evidence" value="ECO:0007669"/>
    <property type="project" value="UniProtKB-UniRule"/>
</dbReference>
<dbReference type="GO" id="GO:0035999">
    <property type="term" value="P:tetrahydrofolate interconversion"/>
    <property type="evidence" value="ECO:0007669"/>
    <property type="project" value="UniProtKB-UniRule"/>
</dbReference>
<dbReference type="CDD" id="cd00477">
    <property type="entry name" value="FTHFS"/>
    <property type="match status" value="1"/>
</dbReference>
<dbReference type="FunFam" id="3.30.1510.10:FF:000001">
    <property type="entry name" value="Formate--tetrahydrofolate ligase"/>
    <property type="match status" value="1"/>
</dbReference>
<dbReference type="FunFam" id="3.10.410.10:FF:000001">
    <property type="entry name" value="Putative formate--tetrahydrofolate ligase"/>
    <property type="match status" value="1"/>
</dbReference>
<dbReference type="Gene3D" id="3.30.1510.10">
    <property type="entry name" value="Domain 2, N(10)-formyltetrahydrofolate synthetase"/>
    <property type="match status" value="1"/>
</dbReference>
<dbReference type="Gene3D" id="3.10.410.10">
    <property type="entry name" value="Formyltetrahydrofolate synthetase, domain 3"/>
    <property type="match status" value="1"/>
</dbReference>
<dbReference type="Gene3D" id="3.40.50.300">
    <property type="entry name" value="P-loop containing nucleotide triphosphate hydrolases"/>
    <property type="match status" value="1"/>
</dbReference>
<dbReference type="HAMAP" id="MF_01543">
    <property type="entry name" value="FTHFS"/>
    <property type="match status" value="1"/>
</dbReference>
<dbReference type="InterPro" id="IPR000559">
    <property type="entry name" value="Formate_THF_ligase"/>
</dbReference>
<dbReference type="InterPro" id="IPR020628">
    <property type="entry name" value="Formate_THF_ligase_CS"/>
</dbReference>
<dbReference type="InterPro" id="IPR027417">
    <property type="entry name" value="P-loop_NTPase"/>
</dbReference>
<dbReference type="NCBIfam" id="NF010030">
    <property type="entry name" value="PRK13505.1"/>
    <property type="match status" value="1"/>
</dbReference>
<dbReference type="Pfam" id="PF01268">
    <property type="entry name" value="FTHFS"/>
    <property type="match status" value="1"/>
</dbReference>
<dbReference type="SUPFAM" id="SSF52540">
    <property type="entry name" value="P-loop containing nucleoside triphosphate hydrolases"/>
    <property type="match status" value="1"/>
</dbReference>
<dbReference type="PROSITE" id="PS00721">
    <property type="entry name" value="FTHFS_1"/>
    <property type="match status" value="1"/>
</dbReference>
<dbReference type="PROSITE" id="PS00722">
    <property type="entry name" value="FTHFS_2"/>
    <property type="match status" value="1"/>
</dbReference>
<organism>
    <name type="scientific">Rhizobium meliloti (strain 1021)</name>
    <name type="common">Ensifer meliloti</name>
    <name type="synonym">Sinorhizobium meliloti</name>
    <dbReference type="NCBI Taxonomy" id="266834"/>
    <lineage>
        <taxon>Bacteria</taxon>
        <taxon>Pseudomonadati</taxon>
        <taxon>Pseudomonadota</taxon>
        <taxon>Alphaproteobacteria</taxon>
        <taxon>Hyphomicrobiales</taxon>
        <taxon>Rhizobiaceae</taxon>
        <taxon>Sinorhizobium/Ensifer group</taxon>
        <taxon>Sinorhizobium</taxon>
    </lineage>
</organism>
<comment type="catalytic activity">
    <reaction evidence="1">
        <text>(6S)-5,6,7,8-tetrahydrofolate + formate + ATP = (6R)-10-formyltetrahydrofolate + ADP + phosphate</text>
        <dbReference type="Rhea" id="RHEA:20221"/>
        <dbReference type="ChEBI" id="CHEBI:15740"/>
        <dbReference type="ChEBI" id="CHEBI:30616"/>
        <dbReference type="ChEBI" id="CHEBI:43474"/>
        <dbReference type="ChEBI" id="CHEBI:57453"/>
        <dbReference type="ChEBI" id="CHEBI:195366"/>
        <dbReference type="ChEBI" id="CHEBI:456216"/>
        <dbReference type="EC" id="6.3.4.3"/>
    </reaction>
</comment>
<comment type="pathway">
    <text evidence="1">One-carbon metabolism; tetrahydrofolate interconversion.</text>
</comment>
<comment type="similarity">
    <text evidence="1">Belongs to the formate--tetrahydrofolate ligase family.</text>
</comment>
<comment type="sequence caution" evidence="2">
    <conflict type="erroneous initiation">
        <sequence resource="EMBL-CDS" id="CAC46969"/>
    </conflict>
</comment>
<name>FTHS_RHIME</name>